<accession>P35707</accession>
<comment type="function">
    <text>Low-potential electron donor to a number of redox enzymes.</text>
</comment>
<comment type="cofactor">
    <cofactor>
        <name>FMN</name>
        <dbReference type="ChEBI" id="CHEBI:58210"/>
    </cofactor>
</comment>
<comment type="similarity">
    <text evidence="2">Belongs to the flavodoxin family.</text>
</comment>
<sequence length="35" mass="3820">SKKIGLFYGTZTGKTESVAEIIDEFGDEVVTLDID</sequence>
<protein>
    <recommendedName>
        <fullName>Flavodoxin</fullName>
    </recommendedName>
</protein>
<evidence type="ECO:0000255" key="1">
    <source>
        <dbReference type="PROSITE-ProRule" id="PRU00088"/>
    </source>
</evidence>
<evidence type="ECO:0000305" key="2"/>
<dbReference type="GO" id="GO:0009055">
    <property type="term" value="F:electron transfer activity"/>
    <property type="evidence" value="ECO:0007669"/>
    <property type="project" value="InterPro"/>
</dbReference>
<dbReference type="GO" id="GO:0010181">
    <property type="term" value="F:FMN binding"/>
    <property type="evidence" value="ECO:0007669"/>
    <property type="project" value="InterPro"/>
</dbReference>
<dbReference type="Gene3D" id="3.40.50.360">
    <property type="match status" value="1"/>
</dbReference>
<dbReference type="InterPro" id="IPR008254">
    <property type="entry name" value="Flavodoxin/NO_synth"/>
</dbReference>
<dbReference type="InterPro" id="IPR001226">
    <property type="entry name" value="Flavodoxin_CS"/>
</dbReference>
<dbReference type="InterPro" id="IPR029039">
    <property type="entry name" value="Flavoprotein-like_sf"/>
</dbReference>
<dbReference type="SUPFAM" id="SSF52218">
    <property type="entry name" value="Flavoproteins"/>
    <property type="match status" value="1"/>
</dbReference>
<dbReference type="PROSITE" id="PS00201">
    <property type="entry name" value="FLAVODOXIN"/>
    <property type="match status" value="1"/>
</dbReference>
<dbReference type="PROSITE" id="PS50902">
    <property type="entry name" value="FLAVODOXIN_LIKE"/>
    <property type="match status" value="1"/>
</dbReference>
<reference key="1">
    <citation type="journal article" date="1986" name="Phytochemistry">
        <title>N-terminal amino acid sequences of flavodoxins from Chondrus crispus and Nostoc strain MAC.</title>
        <authorList>
            <person name="Takruri I.A.H."/>
            <person name="Boulter D."/>
            <person name="Fitzgerald M.P."/>
            <person name="Hutber G.N."/>
            <person name="Rogers L.J."/>
        </authorList>
    </citation>
    <scope>PROTEIN SEQUENCE</scope>
</reference>
<organism>
    <name type="scientific">Nostoc sp. (strain MAC)</name>
    <dbReference type="NCBI Taxonomy" id="35822"/>
    <lineage>
        <taxon>Bacteria</taxon>
        <taxon>Bacillati</taxon>
        <taxon>Cyanobacteriota</taxon>
        <taxon>Cyanophyceae</taxon>
        <taxon>Nostocales</taxon>
        <taxon>Nostocaceae</taxon>
        <taxon>Nostoc</taxon>
    </lineage>
</organism>
<keyword id="KW-0903">Direct protein sequencing</keyword>
<keyword id="KW-0249">Electron transport</keyword>
<keyword id="KW-0285">Flavoprotein</keyword>
<keyword id="KW-0288">FMN</keyword>
<keyword id="KW-0813">Transport</keyword>
<proteinExistence type="evidence at protein level"/>
<feature type="chain" id="PRO_0000171640" description="Flavodoxin">
    <location>
        <begin position="1"/>
        <end position="35" status="greater than"/>
    </location>
</feature>
<feature type="domain" description="Flavodoxin-like" evidence="1">
    <location>
        <begin position="4"/>
        <end position="35" status="greater than"/>
    </location>
</feature>
<feature type="non-terminal residue">
    <location>
        <position position="35"/>
    </location>
</feature>
<name>FLAV_NOSSM</name>